<gene>
    <name evidence="1" type="primary">atpC</name>
    <name type="ordered locus">THEYE_A0242</name>
</gene>
<name>ATPE_THEYD</name>
<feature type="chain" id="PRO_1000127904" description="ATP synthase epsilon chain">
    <location>
        <begin position="1"/>
        <end position="140"/>
    </location>
</feature>
<evidence type="ECO:0000255" key="1">
    <source>
        <dbReference type="HAMAP-Rule" id="MF_00530"/>
    </source>
</evidence>
<reference key="1">
    <citation type="submission" date="2008-08" db="EMBL/GenBank/DDBJ databases">
        <title>The complete genome sequence of Thermodesulfovibrio yellowstonii strain ATCC 51303 / DSM 11347 / YP87.</title>
        <authorList>
            <person name="Dodson R.J."/>
            <person name="Durkin A.S."/>
            <person name="Wu M."/>
            <person name="Eisen J."/>
            <person name="Sutton G."/>
        </authorList>
    </citation>
    <scope>NUCLEOTIDE SEQUENCE [LARGE SCALE GENOMIC DNA]</scope>
    <source>
        <strain>ATCC 51303 / DSM 11347 / YP87</strain>
    </source>
</reference>
<comment type="function">
    <text evidence="1">Produces ATP from ADP in the presence of a proton gradient across the membrane.</text>
</comment>
<comment type="subunit">
    <text evidence="1">F-type ATPases have 2 components, CF(1) - the catalytic core - and CF(0) - the membrane proton channel. CF(1) has five subunits: alpha(3), beta(3), gamma(1), delta(1), epsilon(1). CF(0) has three main subunits: a, b and c.</text>
</comment>
<comment type="subcellular location">
    <subcellularLocation>
        <location evidence="1">Cell inner membrane</location>
        <topology evidence="1">Peripheral membrane protein</topology>
    </subcellularLocation>
</comment>
<comment type="similarity">
    <text evidence="1">Belongs to the ATPase epsilon chain family.</text>
</comment>
<organism>
    <name type="scientific">Thermodesulfovibrio yellowstonii (strain ATCC 51303 / DSM 11347 / YP87)</name>
    <dbReference type="NCBI Taxonomy" id="289376"/>
    <lineage>
        <taxon>Bacteria</taxon>
        <taxon>Pseudomonadati</taxon>
        <taxon>Nitrospirota</taxon>
        <taxon>Thermodesulfovibrionia</taxon>
        <taxon>Thermodesulfovibrionales</taxon>
        <taxon>Thermodesulfovibrionaceae</taxon>
        <taxon>Thermodesulfovibrio</taxon>
    </lineage>
</organism>
<dbReference type="EMBL" id="CP001147">
    <property type="protein sequence ID" value="ACI21146.1"/>
    <property type="molecule type" value="Genomic_DNA"/>
</dbReference>
<dbReference type="RefSeq" id="WP_012545870.1">
    <property type="nucleotide sequence ID" value="NC_011296.1"/>
</dbReference>
<dbReference type="RefSeq" id="YP_002248091.1">
    <property type="nucleotide sequence ID" value="NC_011296.1"/>
</dbReference>
<dbReference type="SMR" id="B5YI25"/>
<dbReference type="FunCoup" id="B5YI25">
    <property type="interactions" value="295"/>
</dbReference>
<dbReference type="STRING" id="289376.THEYE_A0242"/>
<dbReference type="EnsemblBacteria" id="ACI21146">
    <property type="protein sequence ID" value="ACI21146"/>
    <property type="gene ID" value="THEYE_A0242"/>
</dbReference>
<dbReference type="KEGG" id="tye:THEYE_A0242"/>
<dbReference type="PATRIC" id="fig|289376.4.peg.239"/>
<dbReference type="eggNOG" id="COG0355">
    <property type="taxonomic scope" value="Bacteria"/>
</dbReference>
<dbReference type="HOGENOM" id="CLU_084338_1_3_0"/>
<dbReference type="InParanoid" id="B5YI25"/>
<dbReference type="OrthoDB" id="9799969at2"/>
<dbReference type="Proteomes" id="UP000000718">
    <property type="component" value="Chromosome"/>
</dbReference>
<dbReference type="GO" id="GO:0005886">
    <property type="term" value="C:plasma membrane"/>
    <property type="evidence" value="ECO:0007669"/>
    <property type="project" value="UniProtKB-SubCell"/>
</dbReference>
<dbReference type="GO" id="GO:0045259">
    <property type="term" value="C:proton-transporting ATP synthase complex"/>
    <property type="evidence" value="ECO:0007669"/>
    <property type="project" value="UniProtKB-KW"/>
</dbReference>
<dbReference type="GO" id="GO:0005524">
    <property type="term" value="F:ATP binding"/>
    <property type="evidence" value="ECO:0007669"/>
    <property type="project" value="UniProtKB-UniRule"/>
</dbReference>
<dbReference type="GO" id="GO:0046933">
    <property type="term" value="F:proton-transporting ATP synthase activity, rotational mechanism"/>
    <property type="evidence" value="ECO:0007669"/>
    <property type="project" value="UniProtKB-UniRule"/>
</dbReference>
<dbReference type="GO" id="GO:0015986">
    <property type="term" value="P:proton motive force-driven ATP synthesis"/>
    <property type="evidence" value="ECO:0000318"/>
    <property type="project" value="GO_Central"/>
</dbReference>
<dbReference type="CDD" id="cd12152">
    <property type="entry name" value="F1-ATPase_delta"/>
    <property type="match status" value="1"/>
</dbReference>
<dbReference type="Gene3D" id="1.20.5.440">
    <property type="entry name" value="ATP synthase delta/epsilon subunit, C-terminal domain"/>
    <property type="match status" value="1"/>
</dbReference>
<dbReference type="Gene3D" id="2.60.15.10">
    <property type="entry name" value="F0F1 ATP synthase delta/epsilon subunit, N-terminal"/>
    <property type="match status" value="1"/>
</dbReference>
<dbReference type="HAMAP" id="MF_00530">
    <property type="entry name" value="ATP_synth_epsil_bac"/>
    <property type="match status" value="1"/>
</dbReference>
<dbReference type="InterPro" id="IPR036794">
    <property type="entry name" value="ATP_F1_dsu/esu_C_sf"/>
</dbReference>
<dbReference type="InterPro" id="IPR001469">
    <property type="entry name" value="ATP_synth_F1_dsu/esu"/>
</dbReference>
<dbReference type="InterPro" id="IPR020546">
    <property type="entry name" value="ATP_synth_F1_dsu/esu_N"/>
</dbReference>
<dbReference type="InterPro" id="IPR020547">
    <property type="entry name" value="ATP_synth_F1_esu_C"/>
</dbReference>
<dbReference type="InterPro" id="IPR036771">
    <property type="entry name" value="ATPsynth_dsu/esu_N"/>
</dbReference>
<dbReference type="NCBIfam" id="TIGR01216">
    <property type="entry name" value="ATP_synt_epsi"/>
    <property type="match status" value="1"/>
</dbReference>
<dbReference type="NCBIfam" id="NF009980">
    <property type="entry name" value="PRK13446.1"/>
    <property type="match status" value="1"/>
</dbReference>
<dbReference type="PANTHER" id="PTHR13822">
    <property type="entry name" value="ATP SYNTHASE DELTA/EPSILON CHAIN"/>
    <property type="match status" value="1"/>
</dbReference>
<dbReference type="PANTHER" id="PTHR13822:SF10">
    <property type="entry name" value="ATP SYNTHASE EPSILON CHAIN, CHLOROPLASTIC"/>
    <property type="match status" value="1"/>
</dbReference>
<dbReference type="Pfam" id="PF00401">
    <property type="entry name" value="ATP-synt_DE"/>
    <property type="match status" value="1"/>
</dbReference>
<dbReference type="Pfam" id="PF02823">
    <property type="entry name" value="ATP-synt_DE_N"/>
    <property type="match status" value="1"/>
</dbReference>
<dbReference type="SUPFAM" id="SSF46604">
    <property type="entry name" value="Epsilon subunit of F1F0-ATP synthase C-terminal domain"/>
    <property type="match status" value="1"/>
</dbReference>
<dbReference type="SUPFAM" id="SSF51344">
    <property type="entry name" value="Epsilon subunit of F1F0-ATP synthase N-terminal domain"/>
    <property type="match status" value="1"/>
</dbReference>
<protein>
    <recommendedName>
        <fullName evidence="1">ATP synthase epsilon chain</fullName>
    </recommendedName>
    <alternativeName>
        <fullName evidence="1">ATP synthase F1 sector epsilon subunit</fullName>
    </alternativeName>
    <alternativeName>
        <fullName evidence="1">F-ATPase epsilon subunit</fullName>
    </alternativeName>
</protein>
<keyword id="KW-0066">ATP synthesis</keyword>
<keyword id="KW-0997">Cell inner membrane</keyword>
<keyword id="KW-1003">Cell membrane</keyword>
<keyword id="KW-0139">CF(1)</keyword>
<keyword id="KW-0375">Hydrogen ion transport</keyword>
<keyword id="KW-0406">Ion transport</keyword>
<keyword id="KW-0472">Membrane</keyword>
<keyword id="KW-1185">Reference proteome</keyword>
<keyword id="KW-0813">Transport</keyword>
<accession>B5YI25</accession>
<sequence>MENKLKLEVITPYGEVINEEVDEVYTTGAEGDFGVFPGHCAFMTAIRIGSLSYKKDGQMHYLFVNRGYCEVLNDRVLVLVGSAERVEEIDVERAKAALARAEERLRKAQAGETDIDLARAQAALERATIRIQLATKLIPR</sequence>
<proteinExistence type="inferred from homology"/>